<accession>Q0TCE1</accession>
<protein>
    <recommendedName>
        <fullName evidence="1">Large ribosomal subunit protein uL3</fullName>
    </recommendedName>
    <alternativeName>
        <fullName evidence="2">50S ribosomal protein L3</fullName>
    </alternativeName>
</protein>
<dbReference type="EMBL" id="CP000247">
    <property type="protein sequence ID" value="ABG71388.1"/>
    <property type="molecule type" value="Genomic_DNA"/>
</dbReference>
<dbReference type="RefSeq" id="WP_000579833.1">
    <property type="nucleotide sequence ID" value="NC_008253.1"/>
</dbReference>
<dbReference type="SMR" id="Q0TCE1"/>
<dbReference type="GeneID" id="86948184"/>
<dbReference type="KEGG" id="ecp:ECP_3408"/>
<dbReference type="HOGENOM" id="CLU_044142_4_1_6"/>
<dbReference type="Proteomes" id="UP000009182">
    <property type="component" value="Chromosome"/>
</dbReference>
<dbReference type="GO" id="GO:0022625">
    <property type="term" value="C:cytosolic large ribosomal subunit"/>
    <property type="evidence" value="ECO:0007669"/>
    <property type="project" value="TreeGrafter"/>
</dbReference>
<dbReference type="GO" id="GO:0019843">
    <property type="term" value="F:rRNA binding"/>
    <property type="evidence" value="ECO:0007669"/>
    <property type="project" value="UniProtKB-UniRule"/>
</dbReference>
<dbReference type="GO" id="GO:0003735">
    <property type="term" value="F:structural constituent of ribosome"/>
    <property type="evidence" value="ECO:0007669"/>
    <property type="project" value="InterPro"/>
</dbReference>
<dbReference type="GO" id="GO:0006412">
    <property type="term" value="P:translation"/>
    <property type="evidence" value="ECO:0007669"/>
    <property type="project" value="UniProtKB-UniRule"/>
</dbReference>
<dbReference type="FunFam" id="2.40.30.10:FF:000004">
    <property type="entry name" value="50S ribosomal protein L3"/>
    <property type="match status" value="1"/>
</dbReference>
<dbReference type="FunFam" id="3.30.160.810:FF:000001">
    <property type="entry name" value="50S ribosomal protein L3"/>
    <property type="match status" value="1"/>
</dbReference>
<dbReference type="Gene3D" id="3.30.160.810">
    <property type="match status" value="1"/>
</dbReference>
<dbReference type="Gene3D" id="2.40.30.10">
    <property type="entry name" value="Translation factors"/>
    <property type="match status" value="1"/>
</dbReference>
<dbReference type="HAMAP" id="MF_01325_B">
    <property type="entry name" value="Ribosomal_uL3_B"/>
    <property type="match status" value="1"/>
</dbReference>
<dbReference type="InterPro" id="IPR000597">
    <property type="entry name" value="Ribosomal_uL3"/>
</dbReference>
<dbReference type="InterPro" id="IPR019927">
    <property type="entry name" value="Ribosomal_uL3_bac/org-type"/>
</dbReference>
<dbReference type="InterPro" id="IPR019926">
    <property type="entry name" value="Ribosomal_uL3_CS"/>
</dbReference>
<dbReference type="InterPro" id="IPR009000">
    <property type="entry name" value="Transl_B-barrel_sf"/>
</dbReference>
<dbReference type="NCBIfam" id="TIGR03625">
    <property type="entry name" value="L3_bact"/>
    <property type="match status" value="1"/>
</dbReference>
<dbReference type="PANTHER" id="PTHR11229">
    <property type="entry name" value="50S RIBOSOMAL PROTEIN L3"/>
    <property type="match status" value="1"/>
</dbReference>
<dbReference type="PANTHER" id="PTHR11229:SF16">
    <property type="entry name" value="LARGE RIBOSOMAL SUBUNIT PROTEIN UL3C"/>
    <property type="match status" value="1"/>
</dbReference>
<dbReference type="Pfam" id="PF00297">
    <property type="entry name" value="Ribosomal_L3"/>
    <property type="match status" value="1"/>
</dbReference>
<dbReference type="SUPFAM" id="SSF50447">
    <property type="entry name" value="Translation proteins"/>
    <property type="match status" value="1"/>
</dbReference>
<dbReference type="PROSITE" id="PS00474">
    <property type="entry name" value="RIBOSOMAL_L3"/>
    <property type="match status" value="1"/>
</dbReference>
<evidence type="ECO:0000255" key="1">
    <source>
        <dbReference type="HAMAP-Rule" id="MF_01325"/>
    </source>
</evidence>
<evidence type="ECO:0000305" key="2"/>
<gene>
    <name evidence="1" type="primary">rplC</name>
    <name type="ordered locus">ECP_3408</name>
</gene>
<sequence length="209" mass="22244">MIGLVGKKVGMTRIFTEDGVSIPVTVIEVEANRVTQVKDLANDGYRAIQVTTGAKKANRVTKPEAGHFAKAGVEAGRGLWEFRLAEGEEFTVGQSISVELFADVKKVDVTGTSKGKGFAGTVKRWNFRTQDATHGNSLSHRVPGSIGQNQTPGKVFKGKKMAGQMGNERVTVQSLDVVRVDAERNLLLVKGAVPGATGSDLIVKPAVKA</sequence>
<proteinExistence type="inferred from homology"/>
<reference key="1">
    <citation type="journal article" date="2006" name="Mol. Microbiol.">
        <title>Role of pathogenicity island-associated integrases in the genome plasticity of uropathogenic Escherichia coli strain 536.</title>
        <authorList>
            <person name="Hochhut B."/>
            <person name="Wilde C."/>
            <person name="Balling G."/>
            <person name="Middendorf B."/>
            <person name="Dobrindt U."/>
            <person name="Brzuszkiewicz E."/>
            <person name="Gottschalk G."/>
            <person name="Carniel E."/>
            <person name="Hacker J."/>
        </authorList>
    </citation>
    <scope>NUCLEOTIDE SEQUENCE [LARGE SCALE GENOMIC DNA]</scope>
    <source>
        <strain>536 / UPEC</strain>
    </source>
</reference>
<organism>
    <name type="scientific">Escherichia coli O6:K15:H31 (strain 536 / UPEC)</name>
    <dbReference type="NCBI Taxonomy" id="362663"/>
    <lineage>
        <taxon>Bacteria</taxon>
        <taxon>Pseudomonadati</taxon>
        <taxon>Pseudomonadota</taxon>
        <taxon>Gammaproteobacteria</taxon>
        <taxon>Enterobacterales</taxon>
        <taxon>Enterobacteriaceae</taxon>
        <taxon>Escherichia</taxon>
    </lineage>
</organism>
<name>RL3_ECOL5</name>
<keyword id="KW-0488">Methylation</keyword>
<keyword id="KW-0687">Ribonucleoprotein</keyword>
<keyword id="KW-0689">Ribosomal protein</keyword>
<keyword id="KW-0694">RNA-binding</keyword>
<keyword id="KW-0699">rRNA-binding</keyword>
<comment type="function">
    <text evidence="1">One of the primary rRNA binding proteins, it binds directly near the 3'-end of the 23S rRNA, where it nucleates assembly of the 50S subunit.</text>
</comment>
<comment type="subunit">
    <text evidence="1">Part of the 50S ribosomal subunit. Forms a cluster with proteins L14 and L19.</text>
</comment>
<comment type="PTM">
    <text evidence="1">Methylated by PrmB.</text>
</comment>
<comment type="similarity">
    <text evidence="1">Belongs to the universal ribosomal protein uL3 family.</text>
</comment>
<feature type="chain" id="PRO_1000052044" description="Large ribosomal subunit protein uL3">
    <location>
        <begin position="1"/>
        <end position="209"/>
    </location>
</feature>
<feature type="modified residue" description="N5-methylglutamine" evidence="1">
    <location>
        <position position="150"/>
    </location>
</feature>